<gene>
    <name evidence="1" type="primary">rppH</name>
    <name evidence="1" type="synonym">nudH</name>
    <name type="ordered locus">SUN_0455</name>
</gene>
<keyword id="KW-0378">Hydrolase</keyword>
<dbReference type="EC" id="3.6.1.-" evidence="1"/>
<dbReference type="EMBL" id="AP009179">
    <property type="protein sequence ID" value="BAF71415.1"/>
    <property type="molecule type" value="Genomic_DNA"/>
</dbReference>
<dbReference type="RefSeq" id="WP_011980148.1">
    <property type="nucleotide sequence ID" value="NC_009663.1"/>
</dbReference>
<dbReference type="SMR" id="A6Q7F6"/>
<dbReference type="STRING" id="387093.SUN_0455"/>
<dbReference type="KEGG" id="sun:SUN_0455"/>
<dbReference type="eggNOG" id="COG0494">
    <property type="taxonomic scope" value="Bacteria"/>
</dbReference>
<dbReference type="HOGENOM" id="CLU_087195_3_0_7"/>
<dbReference type="OrthoDB" id="9810648at2"/>
<dbReference type="Proteomes" id="UP000006378">
    <property type="component" value="Chromosome"/>
</dbReference>
<dbReference type="GO" id="GO:0034432">
    <property type="term" value="F:bis(5'-adenosyl)-pentaphosphatase activity"/>
    <property type="evidence" value="ECO:0007669"/>
    <property type="project" value="TreeGrafter"/>
</dbReference>
<dbReference type="GO" id="GO:0008893">
    <property type="term" value="F:guanosine-3',5'-bis(diphosphate) 3'-diphosphatase activity"/>
    <property type="evidence" value="ECO:0007669"/>
    <property type="project" value="TreeGrafter"/>
</dbReference>
<dbReference type="GO" id="GO:0006753">
    <property type="term" value="P:nucleoside phosphate metabolic process"/>
    <property type="evidence" value="ECO:0007669"/>
    <property type="project" value="TreeGrafter"/>
</dbReference>
<dbReference type="GO" id="GO:0019693">
    <property type="term" value="P:ribose phosphate metabolic process"/>
    <property type="evidence" value="ECO:0007669"/>
    <property type="project" value="TreeGrafter"/>
</dbReference>
<dbReference type="CDD" id="cd03671">
    <property type="entry name" value="NUDIX_Ap4A_hydrolase_plant_like"/>
    <property type="match status" value="1"/>
</dbReference>
<dbReference type="Gene3D" id="3.90.79.10">
    <property type="entry name" value="Nucleoside Triphosphate Pyrophosphohydrolase"/>
    <property type="match status" value="1"/>
</dbReference>
<dbReference type="HAMAP" id="MF_00298">
    <property type="entry name" value="Nudix_RppH"/>
    <property type="match status" value="1"/>
</dbReference>
<dbReference type="InterPro" id="IPR020476">
    <property type="entry name" value="Nudix_hydrolase"/>
</dbReference>
<dbReference type="InterPro" id="IPR015797">
    <property type="entry name" value="NUDIX_hydrolase-like_dom_sf"/>
</dbReference>
<dbReference type="InterPro" id="IPR020084">
    <property type="entry name" value="NUDIX_hydrolase_CS"/>
</dbReference>
<dbReference type="InterPro" id="IPR000086">
    <property type="entry name" value="NUDIX_hydrolase_dom"/>
</dbReference>
<dbReference type="InterPro" id="IPR022927">
    <property type="entry name" value="RppH"/>
</dbReference>
<dbReference type="NCBIfam" id="NF001936">
    <property type="entry name" value="PRK00714.1-3"/>
    <property type="match status" value="1"/>
</dbReference>
<dbReference type="NCBIfam" id="NF001938">
    <property type="entry name" value="PRK00714.1-5"/>
    <property type="match status" value="1"/>
</dbReference>
<dbReference type="PANTHER" id="PTHR11839:SF22">
    <property type="entry name" value="NUDIX HYDROLASE 26, CHLOROPLASTIC"/>
    <property type="match status" value="1"/>
</dbReference>
<dbReference type="PANTHER" id="PTHR11839">
    <property type="entry name" value="UDP/ADP-SUGAR PYROPHOSPHATASE"/>
    <property type="match status" value="1"/>
</dbReference>
<dbReference type="Pfam" id="PF00293">
    <property type="entry name" value="NUDIX"/>
    <property type="match status" value="1"/>
</dbReference>
<dbReference type="PRINTS" id="PR00502">
    <property type="entry name" value="NUDIXFAMILY"/>
</dbReference>
<dbReference type="SUPFAM" id="SSF55811">
    <property type="entry name" value="Nudix"/>
    <property type="match status" value="1"/>
</dbReference>
<dbReference type="PROSITE" id="PS51462">
    <property type="entry name" value="NUDIX"/>
    <property type="match status" value="1"/>
</dbReference>
<dbReference type="PROSITE" id="PS00893">
    <property type="entry name" value="NUDIX_BOX"/>
    <property type="match status" value="1"/>
</dbReference>
<evidence type="ECO:0000255" key="1">
    <source>
        <dbReference type="HAMAP-Rule" id="MF_00298"/>
    </source>
</evidence>
<proteinExistence type="inferred from homology"/>
<comment type="function">
    <text evidence="1">Accelerates the degradation of transcripts by removing pyrophosphate from the 5'-end of triphosphorylated RNA, leading to a more labile monophosphorylated state that can stimulate subsequent ribonuclease cleavage.</text>
</comment>
<comment type="cofactor">
    <cofactor evidence="1">
        <name>a divalent metal cation</name>
        <dbReference type="ChEBI" id="CHEBI:60240"/>
    </cofactor>
</comment>
<comment type="similarity">
    <text evidence="1">Belongs to the Nudix hydrolase family. RppH subfamily.</text>
</comment>
<reference key="1">
    <citation type="journal article" date="2007" name="Proc. Natl. Acad. Sci. U.S.A.">
        <title>Deep-sea vent epsilon-proteobacterial genomes provide insights into emergence of pathogens.</title>
        <authorList>
            <person name="Nakagawa S."/>
            <person name="Takaki Y."/>
            <person name="Shimamura S."/>
            <person name="Reysenbach A.-L."/>
            <person name="Takai K."/>
            <person name="Horikoshi K."/>
        </authorList>
    </citation>
    <scope>NUCLEOTIDE SEQUENCE [LARGE SCALE GENOMIC DNA]</scope>
    <source>
        <strain>NBC37-1</strain>
    </source>
</reference>
<protein>
    <recommendedName>
        <fullName evidence="1">RNA pyrophosphohydrolase</fullName>
        <ecNumber evidence="1">3.6.1.-</ecNumber>
    </recommendedName>
    <alternativeName>
        <fullName evidence="1">(Di)nucleoside polyphosphate hydrolase</fullName>
    </alternativeName>
</protein>
<accession>A6Q7F6</accession>
<organism>
    <name type="scientific">Sulfurovum sp. (strain NBC37-1)</name>
    <dbReference type="NCBI Taxonomy" id="387093"/>
    <lineage>
        <taxon>Bacteria</taxon>
        <taxon>Pseudomonadati</taxon>
        <taxon>Campylobacterota</taxon>
        <taxon>Epsilonproteobacteria</taxon>
        <taxon>Campylobacterales</taxon>
        <taxon>Sulfurovaceae</taxon>
        <taxon>Sulfurovum</taxon>
    </lineage>
</organism>
<feature type="chain" id="PRO_1000022005" description="RNA pyrophosphohydrolase">
    <location>
        <begin position="1"/>
        <end position="157"/>
    </location>
</feature>
<feature type="domain" description="Nudix hydrolase" evidence="1">
    <location>
        <begin position="6"/>
        <end position="149"/>
    </location>
</feature>
<feature type="short sequence motif" description="Nudix box">
    <location>
        <begin position="43"/>
        <end position="64"/>
    </location>
</feature>
<name>RPPH_SULNB</name>
<sequence length="157" mass="18725">MQNKKSYRPNVAAVILSSKYPEKCEFFVAHRTDIRNAWQFPQGGIDEGETPEDALYRELLEEIGCNNVEILGEFPEWITYDFPKTARGKVYPFDGQTQKYFLVRLKEEAQINLQAFEIPEFKEYTFVKYDELFQKVTYFKRKVYRRVIDHFIKEGLI</sequence>